<protein>
    <recommendedName>
        <fullName>Putative S-adenosyl-L-methionine-dependent methyltransferase MMAR_1595</fullName>
        <ecNumber>2.1.1.-</ecNumber>
    </recommendedName>
</protein>
<comment type="function">
    <text evidence="1">Exhibits S-adenosyl-L-methionine-dependent methyltransferase activity.</text>
</comment>
<comment type="similarity">
    <text evidence="2">Belongs to the UPF0677 family.</text>
</comment>
<feature type="chain" id="PRO_0000361165" description="Putative S-adenosyl-L-methionine-dependent methyltransferase MMAR_1595">
    <location>
        <begin position="1"/>
        <end position="318"/>
    </location>
</feature>
<feature type="binding site" evidence="1">
    <location>
        <position position="132"/>
    </location>
    <ligand>
        <name>S-adenosyl-L-methionine</name>
        <dbReference type="ChEBI" id="CHEBI:59789"/>
    </ligand>
</feature>
<feature type="binding site" evidence="1">
    <location>
        <begin position="161"/>
        <end position="162"/>
    </location>
    <ligand>
        <name>S-adenosyl-L-methionine</name>
        <dbReference type="ChEBI" id="CHEBI:59789"/>
    </ligand>
</feature>
<evidence type="ECO:0000250" key="1"/>
<evidence type="ECO:0000305" key="2"/>
<accession>B2HHB4</accession>
<reference key="1">
    <citation type="journal article" date="2008" name="Genome Res.">
        <title>Insights from the complete genome sequence of Mycobacterium marinum on the evolution of Mycobacterium tuberculosis.</title>
        <authorList>
            <person name="Stinear T.P."/>
            <person name="Seemann T."/>
            <person name="Harrison P.F."/>
            <person name="Jenkin G.A."/>
            <person name="Davies J.K."/>
            <person name="Johnson P.D."/>
            <person name="Abdellah Z."/>
            <person name="Arrowsmith C."/>
            <person name="Chillingworth T."/>
            <person name="Churcher C."/>
            <person name="Clarke K."/>
            <person name="Cronin A."/>
            <person name="Davis P."/>
            <person name="Goodhead I."/>
            <person name="Holroyd N."/>
            <person name="Jagels K."/>
            <person name="Lord A."/>
            <person name="Moule S."/>
            <person name="Mungall K."/>
            <person name="Norbertczak H."/>
            <person name="Quail M.A."/>
            <person name="Rabbinowitsch E."/>
            <person name="Walker D."/>
            <person name="White B."/>
            <person name="Whitehead S."/>
            <person name="Small P.L."/>
            <person name="Brosch R."/>
            <person name="Ramakrishnan L."/>
            <person name="Fischbach M.A."/>
            <person name="Parkhill J."/>
            <person name="Cole S.T."/>
        </authorList>
    </citation>
    <scope>NUCLEOTIDE SEQUENCE [LARGE SCALE GENOMIC DNA]</scope>
    <source>
        <strain>ATCC BAA-535 / M</strain>
    </source>
</reference>
<keyword id="KW-0489">Methyltransferase</keyword>
<keyword id="KW-1185">Reference proteome</keyword>
<keyword id="KW-0949">S-adenosyl-L-methionine</keyword>
<keyword id="KW-0808">Transferase</keyword>
<sequence>MSITKNAPREGAEEVAATALGVAAARAAETRRQRPLIVDPFAQLFVDAAGQDLWSMVASGAAHDELASADPALAAVMQTSLGHIASRTKFFDEFVLAAADAGIRQVVSLGAGLDTRAWRLSWPDAVTVYELEQPNVLEFKLATLRDNGATPAANYVDVPVDLHRCWPRSLCLAGFDPAAPTAWLVEGLLPFLSVAAQDLLFGDVHKLSVPGSWLAAEALSSEFLKPTTVARQRARIRRMRVTAATLAGLSNVTELWDLAEGRSDVADWLRGRGWHASVLTAERLLARYHRSAPVELGDATPPSLYVTARLSAESSLDA</sequence>
<name>Y1595_MYCMM</name>
<organism>
    <name type="scientific">Mycobacterium marinum (strain ATCC BAA-535 / M)</name>
    <dbReference type="NCBI Taxonomy" id="216594"/>
    <lineage>
        <taxon>Bacteria</taxon>
        <taxon>Bacillati</taxon>
        <taxon>Actinomycetota</taxon>
        <taxon>Actinomycetes</taxon>
        <taxon>Mycobacteriales</taxon>
        <taxon>Mycobacteriaceae</taxon>
        <taxon>Mycobacterium</taxon>
        <taxon>Mycobacterium ulcerans group</taxon>
    </lineage>
</organism>
<proteinExistence type="inferred from homology"/>
<dbReference type="EC" id="2.1.1.-"/>
<dbReference type="EMBL" id="CP000854">
    <property type="protein sequence ID" value="ACC40046.1"/>
    <property type="molecule type" value="Genomic_DNA"/>
</dbReference>
<dbReference type="RefSeq" id="WP_012393429.1">
    <property type="nucleotide sequence ID" value="NC_010612.1"/>
</dbReference>
<dbReference type="SMR" id="B2HHB4"/>
<dbReference type="STRING" id="216594.MMAR_1595"/>
<dbReference type="KEGG" id="mmi:MMAR_1595"/>
<dbReference type="eggNOG" id="COG3315">
    <property type="taxonomic scope" value="Bacteria"/>
</dbReference>
<dbReference type="HOGENOM" id="CLU_056160_2_1_11"/>
<dbReference type="OrthoDB" id="9806164at2"/>
<dbReference type="Proteomes" id="UP000001190">
    <property type="component" value="Chromosome"/>
</dbReference>
<dbReference type="GO" id="GO:0008168">
    <property type="term" value="F:methyltransferase activity"/>
    <property type="evidence" value="ECO:0007669"/>
    <property type="project" value="UniProtKB-KW"/>
</dbReference>
<dbReference type="GO" id="GO:0032259">
    <property type="term" value="P:methylation"/>
    <property type="evidence" value="ECO:0007669"/>
    <property type="project" value="UniProtKB-KW"/>
</dbReference>
<dbReference type="Gene3D" id="3.40.50.150">
    <property type="entry name" value="Vaccinia Virus protein VP39"/>
    <property type="match status" value="1"/>
</dbReference>
<dbReference type="InterPro" id="IPR007213">
    <property type="entry name" value="Ppm1/Ppm2/Tcmp"/>
</dbReference>
<dbReference type="InterPro" id="IPR029063">
    <property type="entry name" value="SAM-dependent_MTases_sf"/>
</dbReference>
<dbReference type="InterPro" id="IPR011610">
    <property type="entry name" value="SAM_mthyl_Trfase_ML2640-like"/>
</dbReference>
<dbReference type="NCBIfam" id="TIGR00027">
    <property type="entry name" value="mthyl_TIGR00027"/>
    <property type="match status" value="1"/>
</dbReference>
<dbReference type="PANTHER" id="PTHR43619">
    <property type="entry name" value="S-ADENOSYL-L-METHIONINE-DEPENDENT METHYLTRANSFERASE YKTD-RELATED"/>
    <property type="match status" value="1"/>
</dbReference>
<dbReference type="PANTHER" id="PTHR43619:SF2">
    <property type="entry name" value="S-ADENOSYL-L-METHIONINE-DEPENDENT METHYLTRANSFERASES SUPERFAMILY PROTEIN"/>
    <property type="match status" value="1"/>
</dbReference>
<dbReference type="Pfam" id="PF04072">
    <property type="entry name" value="LCM"/>
    <property type="match status" value="1"/>
</dbReference>
<dbReference type="SUPFAM" id="SSF53335">
    <property type="entry name" value="S-adenosyl-L-methionine-dependent methyltransferases"/>
    <property type="match status" value="1"/>
</dbReference>
<gene>
    <name type="ordered locus">MMAR_1595</name>
</gene>